<accession>C1DNP9</accession>
<comment type="function">
    <text evidence="1">Transfers 2'-(5-triphosphoribosyl)-3'-dephosphocoenzyme-A to the apo-[acyl-carrier-protein] of the malonate decarboxylase to yield holo-[acyl-carrier-protein].</text>
</comment>
<comment type="catalytic activity">
    <reaction evidence="1">
        <text>apo-[malonate decarboxylase ACP] + 2'-(5''-triphospho-alpha-D-ribosyl)-3'-dephospho-CoA = holo-[malonate decarboxylase ACP] + diphosphate</text>
        <dbReference type="Rhea" id="RHEA:42644"/>
        <dbReference type="Rhea" id="RHEA-COMP:10160"/>
        <dbReference type="Rhea" id="RHEA-COMP:10161"/>
        <dbReference type="ChEBI" id="CHEBI:29999"/>
        <dbReference type="ChEBI" id="CHEBI:33019"/>
        <dbReference type="ChEBI" id="CHEBI:61378"/>
        <dbReference type="ChEBI" id="CHEBI:82683"/>
        <dbReference type="EC" id="2.7.7.66"/>
    </reaction>
</comment>
<comment type="similarity">
    <text evidence="1">Belongs to the MdcG family.</text>
</comment>
<name>MDCG_AZOVD</name>
<proteinExistence type="inferred from homology"/>
<organism>
    <name type="scientific">Azotobacter vinelandii (strain DJ / ATCC BAA-1303)</name>
    <dbReference type="NCBI Taxonomy" id="322710"/>
    <lineage>
        <taxon>Bacteria</taxon>
        <taxon>Pseudomonadati</taxon>
        <taxon>Pseudomonadota</taxon>
        <taxon>Gammaproteobacteria</taxon>
        <taxon>Pseudomonadales</taxon>
        <taxon>Pseudomonadaceae</taxon>
        <taxon>Azotobacter</taxon>
    </lineage>
</organism>
<dbReference type="EC" id="2.7.7.66" evidence="1"/>
<dbReference type="EMBL" id="CP001157">
    <property type="protein sequence ID" value="ACO77265.1"/>
    <property type="molecule type" value="Genomic_DNA"/>
</dbReference>
<dbReference type="RefSeq" id="WP_012699688.1">
    <property type="nucleotide sequence ID" value="NC_012560.1"/>
</dbReference>
<dbReference type="STRING" id="322710.Avin_10330"/>
<dbReference type="EnsemblBacteria" id="ACO77265">
    <property type="protein sequence ID" value="ACO77265"/>
    <property type="gene ID" value="Avin_10330"/>
</dbReference>
<dbReference type="GeneID" id="88184381"/>
<dbReference type="KEGG" id="avn:Avin_10330"/>
<dbReference type="eggNOG" id="ENOG502Z8NU">
    <property type="taxonomic scope" value="Bacteria"/>
</dbReference>
<dbReference type="HOGENOM" id="CLU_111981_0_0_6"/>
<dbReference type="OrthoDB" id="1275217at2"/>
<dbReference type="Proteomes" id="UP000002424">
    <property type="component" value="Chromosome"/>
</dbReference>
<dbReference type="GO" id="GO:0016779">
    <property type="term" value="F:nucleotidyltransferase activity"/>
    <property type="evidence" value="ECO:0007669"/>
    <property type="project" value="UniProtKB-UniRule"/>
</dbReference>
<dbReference type="HAMAP" id="MF_00650">
    <property type="entry name" value="Malonate_MdcG"/>
    <property type="match status" value="1"/>
</dbReference>
<dbReference type="InterPro" id="IPR017557">
    <property type="entry name" value="Holo-ACP_synthase"/>
</dbReference>
<dbReference type="InterPro" id="IPR049180">
    <property type="entry name" value="MdcG_C"/>
</dbReference>
<dbReference type="InterPro" id="IPR048903">
    <property type="entry name" value="MdcG_N"/>
</dbReference>
<dbReference type="NCBIfam" id="TIGR03135">
    <property type="entry name" value="malonate_mdcG"/>
    <property type="match status" value="1"/>
</dbReference>
<dbReference type="NCBIfam" id="NF002332">
    <property type="entry name" value="PRK01293.1"/>
    <property type="match status" value="1"/>
</dbReference>
<dbReference type="Pfam" id="PF10620">
    <property type="entry name" value="MdcG"/>
    <property type="match status" value="1"/>
</dbReference>
<dbReference type="Pfam" id="PF20866">
    <property type="entry name" value="MdcG_N"/>
    <property type="match status" value="1"/>
</dbReference>
<gene>
    <name evidence="1" type="primary">mdcG</name>
    <name type="ordered locus">Avin_10330</name>
</gene>
<evidence type="ECO:0000255" key="1">
    <source>
        <dbReference type="HAMAP-Rule" id="MF_00650"/>
    </source>
</evidence>
<feature type="chain" id="PRO_1000212404" description="Phosphoribosyl-dephospho-CoA transferase">
    <location>
        <begin position="1"/>
        <end position="212"/>
    </location>
</feature>
<feature type="active site" evidence="1">
    <location>
        <position position="139"/>
    </location>
</feature>
<feature type="active site" evidence="1">
    <location>
        <position position="141"/>
    </location>
</feature>
<sequence>MHETRLLPQPHDLLWGMSTDRLDAAAPTWAAEVLAAGRPVVVRRAPARDGWIAVGVRGHGREQRHAAWMPRAAIRRRVQPEQLTGGGEREGVCAPLRALALLQPQLDALCRQRGLAWGVTGGAGYQLATGVTVLGEHSDLDLLLRVPRPLERRQALALLERLEQLPCRVDLQLETPAGAVALRDWASPAARVLLKAGSGARLVGDPWREVAA</sequence>
<reference key="1">
    <citation type="journal article" date="2009" name="J. Bacteriol.">
        <title>Genome sequence of Azotobacter vinelandii, an obligate aerobe specialized to support diverse anaerobic metabolic processes.</title>
        <authorList>
            <person name="Setubal J.C."/>
            <person name="Dos Santos P."/>
            <person name="Goldman B.S."/>
            <person name="Ertesvaag H."/>
            <person name="Espin G."/>
            <person name="Rubio L.M."/>
            <person name="Valla S."/>
            <person name="Almeida N.F."/>
            <person name="Balasubramanian D."/>
            <person name="Cromes L."/>
            <person name="Curatti L."/>
            <person name="Du Z."/>
            <person name="Godsy E."/>
            <person name="Goodner B."/>
            <person name="Hellner-Burris K."/>
            <person name="Hernandez J.A."/>
            <person name="Houmiel K."/>
            <person name="Imperial J."/>
            <person name="Kennedy C."/>
            <person name="Larson T.J."/>
            <person name="Latreille P."/>
            <person name="Ligon L.S."/>
            <person name="Lu J."/>
            <person name="Maerk M."/>
            <person name="Miller N.M."/>
            <person name="Norton S."/>
            <person name="O'Carroll I.P."/>
            <person name="Paulsen I."/>
            <person name="Raulfs E.C."/>
            <person name="Roemer R."/>
            <person name="Rosser J."/>
            <person name="Segura D."/>
            <person name="Slater S."/>
            <person name="Stricklin S.L."/>
            <person name="Studholme D.J."/>
            <person name="Sun J."/>
            <person name="Viana C.J."/>
            <person name="Wallin E."/>
            <person name="Wang B."/>
            <person name="Wheeler C."/>
            <person name="Zhu H."/>
            <person name="Dean D.R."/>
            <person name="Dixon R."/>
            <person name="Wood D."/>
        </authorList>
    </citation>
    <scope>NUCLEOTIDE SEQUENCE [LARGE SCALE GENOMIC DNA]</scope>
    <source>
        <strain>DJ / ATCC BAA-1303</strain>
    </source>
</reference>
<protein>
    <recommendedName>
        <fullName evidence="1">Phosphoribosyl-dephospho-CoA transferase</fullName>
        <ecNumber evidence="1">2.7.7.66</ecNumber>
    </recommendedName>
    <alternativeName>
        <fullName evidence="1">Malonate decarboxylase holo-[acyl-carrier-protein] synthase</fullName>
        <shortName evidence="1">Holo-ACP synthase</shortName>
    </alternativeName>
</protein>
<keyword id="KW-0548">Nucleotidyltransferase</keyword>
<keyword id="KW-0808">Transferase</keyword>